<reference key="1">
    <citation type="journal article" date="2005" name="Genome Biol.">
        <title>Full-length cDNAs from chicken bursal lymphocytes to facilitate gene function analysis.</title>
        <authorList>
            <person name="Caldwell R.B."/>
            <person name="Kierzek A.M."/>
            <person name="Arakawa H."/>
            <person name="Bezzubov Y."/>
            <person name="Zaim J."/>
            <person name="Fiedler P."/>
            <person name="Kutter S."/>
            <person name="Blagodatski A."/>
            <person name="Kostovska D."/>
            <person name="Koter M."/>
            <person name="Plachy J."/>
            <person name="Carninci P."/>
            <person name="Hayashizaki Y."/>
            <person name="Buerstedde J.-M."/>
        </authorList>
    </citation>
    <scope>NUCLEOTIDE SEQUENCE [LARGE SCALE MRNA]</scope>
    <source>
        <strain>CB</strain>
        <tissue>Bursa of Fabricius</tissue>
    </source>
</reference>
<gene>
    <name type="primary">SLC16A9</name>
    <name type="synonym">MCT9</name>
    <name type="ORF">RCJMB04_15m4</name>
</gene>
<dbReference type="EMBL" id="AJ720344">
    <property type="protein sequence ID" value="CAG32003.1"/>
    <property type="molecule type" value="mRNA"/>
</dbReference>
<dbReference type="RefSeq" id="NP_001026393.1">
    <property type="nucleotide sequence ID" value="NM_001031222.1"/>
</dbReference>
<dbReference type="SMR" id="Q5ZJU0"/>
<dbReference type="FunCoup" id="Q5ZJU0">
    <property type="interactions" value="8"/>
</dbReference>
<dbReference type="STRING" id="9031.ENSGALP00000071981"/>
<dbReference type="PaxDb" id="9031-ENSGALP00000005024"/>
<dbReference type="GeneID" id="423667"/>
<dbReference type="KEGG" id="gga:423667"/>
<dbReference type="CTD" id="220963"/>
<dbReference type="VEuPathDB" id="HostDB:geneid_423667"/>
<dbReference type="eggNOG" id="KOG2504">
    <property type="taxonomic scope" value="Eukaryota"/>
</dbReference>
<dbReference type="InParanoid" id="Q5ZJU0"/>
<dbReference type="OrthoDB" id="6509908at2759"/>
<dbReference type="PhylomeDB" id="Q5ZJU0"/>
<dbReference type="PRO" id="PR:Q5ZJU0"/>
<dbReference type="Proteomes" id="UP000000539">
    <property type="component" value="Unassembled WGS sequence"/>
</dbReference>
<dbReference type="GO" id="GO:0005886">
    <property type="term" value="C:plasma membrane"/>
    <property type="evidence" value="ECO:0000250"/>
    <property type="project" value="UniProtKB"/>
</dbReference>
<dbReference type="GO" id="GO:0015226">
    <property type="term" value="F:carnitine transmembrane transporter activity"/>
    <property type="evidence" value="ECO:0000250"/>
    <property type="project" value="UniProtKB"/>
</dbReference>
<dbReference type="GO" id="GO:0005308">
    <property type="term" value="F:creatine transmembrane transporter activity"/>
    <property type="evidence" value="ECO:0000250"/>
    <property type="project" value="UniProtKB"/>
</dbReference>
<dbReference type="GO" id="GO:0008028">
    <property type="term" value="F:monocarboxylic acid transmembrane transporter activity"/>
    <property type="evidence" value="ECO:0000318"/>
    <property type="project" value="GO_Central"/>
</dbReference>
<dbReference type="GO" id="GO:1905039">
    <property type="term" value="P:carboxylic acid transmembrane transport"/>
    <property type="evidence" value="ECO:0000318"/>
    <property type="project" value="GO_Central"/>
</dbReference>
<dbReference type="GO" id="GO:1902603">
    <property type="term" value="P:carnitine transmembrane transport"/>
    <property type="evidence" value="ECO:0000250"/>
    <property type="project" value="UniProtKB"/>
</dbReference>
<dbReference type="GO" id="GO:0015881">
    <property type="term" value="P:creatine transmembrane transport"/>
    <property type="evidence" value="ECO:0000250"/>
    <property type="project" value="UniProtKB"/>
</dbReference>
<dbReference type="CDD" id="cd17428">
    <property type="entry name" value="MFS_MCT9"/>
    <property type="match status" value="1"/>
</dbReference>
<dbReference type="FunFam" id="1.20.1250.20:FF:000422">
    <property type="entry name" value="Monocarboxylate transporter 9"/>
    <property type="match status" value="1"/>
</dbReference>
<dbReference type="FunFam" id="1.20.1250.20:FF:000127">
    <property type="entry name" value="Monocarboxylate transporter 9 isoform X2"/>
    <property type="match status" value="1"/>
</dbReference>
<dbReference type="Gene3D" id="1.20.1250.20">
    <property type="entry name" value="MFS general substrate transporter like domains"/>
    <property type="match status" value="2"/>
</dbReference>
<dbReference type="InterPro" id="IPR030767">
    <property type="entry name" value="MCT9"/>
</dbReference>
<dbReference type="InterPro" id="IPR011701">
    <property type="entry name" value="MFS"/>
</dbReference>
<dbReference type="InterPro" id="IPR020846">
    <property type="entry name" value="MFS_dom"/>
</dbReference>
<dbReference type="InterPro" id="IPR036259">
    <property type="entry name" value="MFS_trans_sf"/>
</dbReference>
<dbReference type="InterPro" id="IPR050327">
    <property type="entry name" value="Proton-linked_MCT"/>
</dbReference>
<dbReference type="PANTHER" id="PTHR11360">
    <property type="entry name" value="MONOCARBOXYLATE TRANSPORTER"/>
    <property type="match status" value="1"/>
</dbReference>
<dbReference type="PANTHER" id="PTHR11360:SF158">
    <property type="entry name" value="MONOCARBOXYLATE TRANSPORTER 9"/>
    <property type="match status" value="1"/>
</dbReference>
<dbReference type="Pfam" id="PF07690">
    <property type="entry name" value="MFS_1"/>
    <property type="match status" value="2"/>
</dbReference>
<dbReference type="SUPFAM" id="SSF103473">
    <property type="entry name" value="MFS general substrate transporter"/>
    <property type="match status" value="1"/>
</dbReference>
<dbReference type="PROSITE" id="PS50850">
    <property type="entry name" value="MFS"/>
    <property type="match status" value="1"/>
</dbReference>
<accession>Q5ZJU0</accession>
<proteinExistence type="evidence at transcript level"/>
<sequence>MVYRKPPDGGWGWVIVIVSFFTQFLCYGSPLAVGVLYLEWLDAFGEGKGKTAWVGSLANGIGLLASPVCSICVSSFGARPVAIFSGFMVAGGLMMSSFAPNIYFLYLSYGIVVGLGCGLLYNATVTITCQYFDKRRGLALGLISTGSSVGLFIYAALQRELIELYGLDGCLLIVGALSLNILACGSLMRPLESSDSPSPEKACTDKVPDQYFVYHEKEKTVEENISILEKGYIDEKCANNVPDYKQDNILNKNVLSSINVDEKDTYKKKVVEQTNFCKQLAKRKWQLYLNYWEETVVLFKNRVFSALFFAILLFDIGGFPPSLLMEDIARSANINEEDYHMPLVSIIGIMTAIGKLILGILADFKWVNTLYLYVLTLLMMGAALLAIPFARSYFTLAVLSGILGFLTGNWSIFPYVTTKTVGIEKLTHAYGILMFFAGLGNSLGPPIVGWFYDWTQEYDTAFYFSGFCVLLGGFLLLLAALPCWNACTDRSSKLPPNTYSYKVASSA</sequence>
<protein>
    <recommendedName>
        <fullName>Monocarboxylate transporter 9</fullName>
        <shortName>MCT 9</shortName>
    </recommendedName>
    <alternativeName>
        <fullName>Solute carrier family 16 member 9</fullName>
    </alternativeName>
</protein>
<keyword id="KW-1003">Cell membrane</keyword>
<keyword id="KW-0472">Membrane</keyword>
<keyword id="KW-1185">Reference proteome</keyword>
<keyword id="KW-0812">Transmembrane</keyword>
<keyword id="KW-1133">Transmembrane helix</keyword>
<comment type="function">
    <text evidence="1">Extracellular pH-and Na(+)-sensitive low-affinity creatine transporter. Also functions as a pH-independent carnitine efflux transporter.</text>
</comment>
<comment type="catalytic activity">
    <reaction evidence="1">
        <text>creatine(in) = creatine(out)</text>
        <dbReference type="Rhea" id="RHEA:73043"/>
        <dbReference type="ChEBI" id="CHEBI:57947"/>
    </reaction>
</comment>
<comment type="catalytic activity">
    <reaction evidence="1">
        <text>(R)-carnitine(in) = (R)-carnitine(out)</text>
        <dbReference type="Rhea" id="RHEA:34959"/>
        <dbReference type="ChEBI" id="CHEBI:16347"/>
    </reaction>
</comment>
<comment type="subcellular location">
    <subcellularLocation>
        <location evidence="1">Cell membrane</location>
        <topology evidence="2">Multi-pass membrane protein</topology>
    </subcellularLocation>
</comment>
<comment type="similarity">
    <text evidence="3">Belongs to the major facilitator superfamily. Monocarboxylate porter (TC 2.A.1.13) family.</text>
</comment>
<feature type="chain" id="PRO_0000289335" description="Monocarboxylate transporter 9">
    <location>
        <begin position="1"/>
        <end position="507"/>
    </location>
</feature>
<feature type="topological domain" description="Extracellular" evidence="2">
    <location>
        <begin position="1"/>
        <end position="12"/>
    </location>
</feature>
<feature type="transmembrane region" description="Helical" evidence="2">
    <location>
        <begin position="13"/>
        <end position="33"/>
    </location>
</feature>
<feature type="topological domain" description="Cytoplasmic" evidence="2">
    <location>
        <begin position="34"/>
        <end position="52"/>
    </location>
</feature>
<feature type="transmembrane region" description="Helical" evidence="2">
    <location>
        <begin position="53"/>
        <end position="73"/>
    </location>
</feature>
<feature type="topological domain" description="Extracellular" evidence="2">
    <location>
        <begin position="74"/>
        <end position="79"/>
    </location>
</feature>
<feature type="transmembrane region" description="Helical" evidence="2">
    <location>
        <begin position="80"/>
        <end position="100"/>
    </location>
</feature>
<feature type="topological domain" description="Cytoplasmic" evidence="2">
    <location>
        <begin position="101"/>
        <end position="102"/>
    </location>
</feature>
<feature type="transmembrane region" description="Helical" evidence="2">
    <location>
        <begin position="103"/>
        <end position="123"/>
    </location>
</feature>
<feature type="topological domain" description="Extracellular" evidence="2">
    <location>
        <begin position="124"/>
        <end position="136"/>
    </location>
</feature>
<feature type="transmembrane region" description="Helical" evidence="2">
    <location>
        <begin position="137"/>
        <end position="157"/>
    </location>
</feature>
<feature type="topological domain" description="Cytoplasmic" evidence="2">
    <location>
        <begin position="158"/>
        <end position="163"/>
    </location>
</feature>
<feature type="transmembrane region" description="Helical" evidence="2">
    <location>
        <begin position="164"/>
        <end position="184"/>
    </location>
</feature>
<feature type="topological domain" description="Extracellular" evidence="2">
    <location>
        <begin position="185"/>
        <end position="302"/>
    </location>
</feature>
<feature type="transmembrane region" description="Helical" evidence="2">
    <location>
        <begin position="303"/>
        <end position="323"/>
    </location>
</feature>
<feature type="topological domain" description="Cytoplasmic" evidence="2">
    <location>
        <begin position="324"/>
        <end position="340"/>
    </location>
</feature>
<feature type="transmembrane region" description="Helical" evidence="2">
    <location>
        <begin position="341"/>
        <end position="361"/>
    </location>
</feature>
<feature type="topological domain" description="Extracellular" evidence="2">
    <location>
        <begin position="362"/>
        <end position="369"/>
    </location>
</feature>
<feature type="transmembrane region" description="Helical" evidence="2">
    <location>
        <begin position="370"/>
        <end position="390"/>
    </location>
</feature>
<feature type="topological domain" description="Cytoplasmic" evidence="2">
    <location>
        <begin position="391"/>
        <end position="395"/>
    </location>
</feature>
<feature type="transmembrane region" description="Helical" evidence="2">
    <location>
        <begin position="396"/>
        <end position="416"/>
    </location>
</feature>
<feature type="topological domain" description="Extracellular" evidence="2">
    <location>
        <begin position="417"/>
        <end position="430"/>
    </location>
</feature>
<feature type="transmembrane region" description="Helical" evidence="2">
    <location>
        <begin position="431"/>
        <end position="451"/>
    </location>
</feature>
<feature type="topological domain" description="Cytoplasmic" evidence="2">
    <location>
        <begin position="452"/>
        <end position="460"/>
    </location>
</feature>
<feature type="transmembrane region" description="Helical" evidence="2">
    <location>
        <begin position="461"/>
        <end position="481"/>
    </location>
</feature>
<feature type="topological domain" description="Extracellular" evidence="2">
    <location>
        <begin position="482"/>
        <end position="507"/>
    </location>
</feature>
<evidence type="ECO:0000250" key="1">
    <source>
        <dbReference type="UniProtKB" id="Q7RTY1"/>
    </source>
</evidence>
<evidence type="ECO:0000255" key="2"/>
<evidence type="ECO:0000305" key="3"/>
<organism>
    <name type="scientific">Gallus gallus</name>
    <name type="common">Chicken</name>
    <dbReference type="NCBI Taxonomy" id="9031"/>
    <lineage>
        <taxon>Eukaryota</taxon>
        <taxon>Metazoa</taxon>
        <taxon>Chordata</taxon>
        <taxon>Craniata</taxon>
        <taxon>Vertebrata</taxon>
        <taxon>Euteleostomi</taxon>
        <taxon>Archelosauria</taxon>
        <taxon>Archosauria</taxon>
        <taxon>Dinosauria</taxon>
        <taxon>Saurischia</taxon>
        <taxon>Theropoda</taxon>
        <taxon>Coelurosauria</taxon>
        <taxon>Aves</taxon>
        <taxon>Neognathae</taxon>
        <taxon>Galloanserae</taxon>
        <taxon>Galliformes</taxon>
        <taxon>Phasianidae</taxon>
        <taxon>Phasianinae</taxon>
        <taxon>Gallus</taxon>
    </lineage>
</organism>
<name>MOT9_CHICK</name>